<sequence>MGQTLSEPVLDKHSSSGGDRWLHFGVSHMQGWRISMEDAHCALLNFTDSNSSNPPTSFFGVFDGHGGDRVAKYCRQHLPDIIKSQPSFWKGNYDEALKSGFLAADNALMQDRDMQEDPSGCTATTALIVDHQVIYCANAGDSRTVLGRKGTAEPLSFDHKPNNDVEKARITAAGGFIDFGRVNGSLALSRAIGDFEYKKDSSLPPEKQIVTAFPDVVIHNIDPDDEFLILACDGIWDCKSSQQVVEFVRRGIVARQSLEVICENLMDRCIASNSESCGIGCDNMTICIVAFLHGRGLEDWYNWITQRVNSGEGPCAPPSYAELRGPNTIADARNLQLEYDHIASHEYGSGDTYDSDSDDETIAYDRYYLH</sequence>
<evidence type="ECO:0000250" key="1">
    <source>
        <dbReference type="UniProtKB" id="P35813"/>
    </source>
</evidence>
<evidence type="ECO:0000250" key="2">
    <source>
        <dbReference type="UniProtKB" id="P39966"/>
    </source>
</evidence>
<evidence type="ECO:0000255" key="3">
    <source>
        <dbReference type="PROSITE-ProRule" id="PRU01082"/>
    </source>
</evidence>
<evidence type="ECO:0000269" key="4">
    <source>
    </source>
</evidence>
<evidence type="ECO:0000269" key="5">
    <source>
    </source>
</evidence>
<evidence type="ECO:0000305" key="6"/>
<evidence type="ECO:0000305" key="7">
    <source>
    </source>
</evidence>
<protein>
    <recommendedName>
        <fullName>Protein phosphatase 2C homolog 2</fullName>
        <shortName>PP2C-2</shortName>
        <ecNumber evidence="5">3.1.3.16</ecNumber>
    </recommendedName>
</protein>
<feature type="chain" id="PRO_0000057771" description="Protein phosphatase 2C homolog 2">
    <location>
        <begin position="1"/>
        <end position="370"/>
    </location>
</feature>
<feature type="domain" description="PPM-type phosphatase" evidence="3">
    <location>
        <begin position="23"/>
        <end position="291"/>
    </location>
</feature>
<feature type="binding site" evidence="1">
    <location>
        <position position="63"/>
    </location>
    <ligand>
        <name>Mn(2+)</name>
        <dbReference type="ChEBI" id="CHEBI:29035"/>
        <label>1</label>
    </ligand>
</feature>
<feature type="binding site" evidence="1">
    <location>
        <position position="63"/>
    </location>
    <ligand>
        <name>Mn(2+)</name>
        <dbReference type="ChEBI" id="CHEBI:29035"/>
        <label>2</label>
    </ligand>
</feature>
<feature type="binding site" evidence="1">
    <location>
        <position position="64"/>
    </location>
    <ligand>
        <name>Mn(2+)</name>
        <dbReference type="ChEBI" id="CHEBI:29035"/>
        <label>1</label>
    </ligand>
</feature>
<feature type="binding site" evidence="1">
    <location>
        <position position="233"/>
    </location>
    <ligand>
        <name>Mn(2+)</name>
        <dbReference type="ChEBI" id="CHEBI:29035"/>
        <label>2</label>
    </ligand>
</feature>
<feature type="binding site" evidence="1">
    <location>
        <position position="282"/>
    </location>
    <ligand>
        <name>Mn(2+)</name>
        <dbReference type="ChEBI" id="CHEBI:29035"/>
        <label>2</label>
    </ligand>
</feature>
<feature type="modified residue" description="Phosphoserine" evidence="7">
    <location>
        <position position="355"/>
    </location>
</feature>
<feature type="modified residue" description="Phosphoserine" evidence="7">
    <location>
        <position position="357"/>
    </location>
</feature>
<name>PP2C2_SCHPO</name>
<gene>
    <name type="primary">ptc2</name>
    <name type="ORF">SPCC1223.11</name>
</gene>
<accession>Q09172</accession>
<reference key="1">
    <citation type="journal article" date="1995" name="EMBO J.">
        <title>Counteractive roles of protein phosphatase 2C (PP2C) and a MAP kinase kinase homolog in the osmoregulation of fission yeast.</title>
        <authorList>
            <person name="Shiozaki K."/>
            <person name="Russell P."/>
        </authorList>
    </citation>
    <scope>NUCLEOTIDE SEQUENCE [GENOMIC DNA]</scope>
    <scope>FUNCTION</scope>
    <source>
        <strain>972 / ATCC 24843</strain>
    </source>
</reference>
<reference key="2">
    <citation type="journal article" date="2002" name="Nature">
        <title>The genome sequence of Schizosaccharomyces pombe.</title>
        <authorList>
            <person name="Wood V."/>
            <person name="Gwilliam R."/>
            <person name="Rajandream M.A."/>
            <person name="Lyne M.H."/>
            <person name="Lyne R."/>
            <person name="Stewart A."/>
            <person name="Sgouros J.G."/>
            <person name="Peat N."/>
            <person name="Hayles J."/>
            <person name="Baker S.G."/>
            <person name="Basham D."/>
            <person name="Bowman S."/>
            <person name="Brooks K."/>
            <person name="Brown D."/>
            <person name="Brown S."/>
            <person name="Chillingworth T."/>
            <person name="Churcher C.M."/>
            <person name="Collins M."/>
            <person name="Connor R."/>
            <person name="Cronin A."/>
            <person name="Davis P."/>
            <person name="Feltwell T."/>
            <person name="Fraser A."/>
            <person name="Gentles S."/>
            <person name="Goble A."/>
            <person name="Hamlin N."/>
            <person name="Harris D.E."/>
            <person name="Hidalgo J."/>
            <person name="Hodgson G."/>
            <person name="Holroyd S."/>
            <person name="Hornsby T."/>
            <person name="Howarth S."/>
            <person name="Huckle E.J."/>
            <person name="Hunt S."/>
            <person name="Jagels K."/>
            <person name="James K.D."/>
            <person name="Jones L."/>
            <person name="Jones M."/>
            <person name="Leather S."/>
            <person name="McDonald S."/>
            <person name="McLean J."/>
            <person name="Mooney P."/>
            <person name="Moule S."/>
            <person name="Mungall K.L."/>
            <person name="Murphy L.D."/>
            <person name="Niblett D."/>
            <person name="Odell C."/>
            <person name="Oliver K."/>
            <person name="O'Neil S."/>
            <person name="Pearson D."/>
            <person name="Quail M.A."/>
            <person name="Rabbinowitsch E."/>
            <person name="Rutherford K.M."/>
            <person name="Rutter S."/>
            <person name="Saunders D."/>
            <person name="Seeger K."/>
            <person name="Sharp S."/>
            <person name="Skelton J."/>
            <person name="Simmonds M.N."/>
            <person name="Squares R."/>
            <person name="Squares S."/>
            <person name="Stevens K."/>
            <person name="Taylor K."/>
            <person name="Taylor R.G."/>
            <person name="Tivey A."/>
            <person name="Walsh S.V."/>
            <person name="Warren T."/>
            <person name="Whitehead S."/>
            <person name="Woodward J.R."/>
            <person name="Volckaert G."/>
            <person name="Aert R."/>
            <person name="Robben J."/>
            <person name="Grymonprez B."/>
            <person name="Weltjens I."/>
            <person name="Vanstreels E."/>
            <person name="Rieger M."/>
            <person name="Schaefer M."/>
            <person name="Mueller-Auer S."/>
            <person name="Gabel C."/>
            <person name="Fuchs M."/>
            <person name="Duesterhoeft A."/>
            <person name="Fritzc C."/>
            <person name="Holzer E."/>
            <person name="Moestl D."/>
            <person name="Hilbert H."/>
            <person name="Borzym K."/>
            <person name="Langer I."/>
            <person name="Beck A."/>
            <person name="Lehrach H."/>
            <person name="Reinhardt R."/>
            <person name="Pohl T.M."/>
            <person name="Eger P."/>
            <person name="Zimmermann W."/>
            <person name="Wedler H."/>
            <person name="Wambutt R."/>
            <person name="Purnelle B."/>
            <person name="Goffeau A."/>
            <person name="Cadieu E."/>
            <person name="Dreano S."/>
            <person name="Gloux S."/>
            <person name="Lelaure V."/>
            <person name="Mottier S."/>
            <person name="Galibert F."/>
            <person name="Aves S.J."/>
            <person name="Xiang Z."/>
            <person name="Hunt C."/>
            <person name="Moore K."/>
            <person name="Hurst S.M."/>
            <person name="Lucas M."/>
            <person name="Rochet M."/>
            <person name="Gaillardin C."/>
            <person name="Tallada V.A."/>
            <person name="Garzon A."/>
            <person name="Thode G."/>
            <person name="Daga R.R."/>
            <person name="Cruzado L."/>
            <person name="Jimenez J."/>
            <person name="Sanchez M."/>
            <person name="del Rey F."/>
            <person name="Benito J."/>
            <person name="Dominguez A."/>
            <person name="Revuelta J.L."/>
            <person name="Moreno S."/>
            <person name="Armstrong J."/>
            <person name="Forsburg S.L."/>
            <person name="Cerutti L."/>
            <person name="Lowe T."/>
            <person name="McCombie W.R."/>
            <person name="Paulsen I."/>
            <person name="Potashkin J."/>
            <person name="Shpakovski G.V."/>
            <person name="Ussery D."/>
            <person name="Barrell B.G."/>
            <person name="Nurse P."/>
        </authorList>
    </citation>
    <scope>NUCLEOTIDE SEQUENCE [LARGE SCALE GENOMIC DNA]</scope>
    <source>
        <strain>972 / ATCC 24843</strain>
    </source>
</reference>
<reference key="3">
    <citation type="journal article" date="1998" name="Biochem. Biophys. Res. Commun.">
        <title>Isoform-specific phosphorylation of fission yeast type 2C protein phosphatase.</title>
        <authorList>
            <person name="Kobayashi T."/>
            <person name="Sadaie M."/>
            <person name="Ohnishi M."/>
            <person name="Wang H."/>
            <person name="Ikeda S."/>
            <person name="Hanada M."/>
            <person name="Yanagawa Y."/>
            <person name="Nakajima T."/>
            <person name="Tamura S."/>
        </authorList>
    </citation>
    <scope>CATALYTIC ACTIVITY</scope>
    <scope>ACTIVITY REGULATION</scope>
    <scope>PHOSPHORYLATION AT SER-355 AND SER-357</scope>
</reference>
<keyword id="KW-0963">Cytoplasm</keyword>
<keyword id="KW-0378">Hydrolase</keyword>
<keyword id="KW-0460">Magnesium</keyword>
<keyword id="KW-0464">Manganese</keyword>
<keyword id="KW-0479">Metal-binding</keyword>
<keyword id="KW-0539">Nucleus</keyword>
<keyword id="KW-0597">Phosphoprotein</keyword>
<keyword id="KW-0904">Protein phosphatase</keyword>
<keyword id="KW-1185">Reference proteome</keyword>
<dbReference type="EC" id="3.1.3.16" evidence="5"/>
<dbReference type="EMBL" id="L34881">
    <property type="protein sequence ID" value="AAA67320.1"/>
    <property type="molecule type" value="Genomic_DNA"/>
</dbReference>
<dbReference type="EMBL" id="CU329672">
    <property type="protein sequence ID" value="CAA20880.1"/>
    <property type="molecule type" value="Genomic_DNA"/>
</dbReference>
<dbReference type="PIR" id="S54297">
    <property type="entry name" value="S54297"/>
</dbReference>
<dbReference type="RefSeq" id="NP_588356.1">
    <property type="nucleotide sequence ID" value="NM_001023347.2"/>
</dbReference>
<dbReference type="SMR" id="Q09172"/>
<dbReference type="BioGRID" id="275822">
    <property type="interactions" value="88"/>
</dbReference>
<dbReference type="FunCoup" id="Q09172">
    <property type="interactions" value="353"/>
</dbReference>
<dbReference type="STRING" id="284812.Q09172"/>
<dbReference type="iPTMnet" id="Q09172"/>
<dbReference type="SwissPalm" id="Q09172"/>
<dbReference type="PaxDb" id="4896-SPCC1223.11.1"/>
<dbReference type="EnsemblFungi" id="SPCC1223.11.1">
    <property type="protein sequence ID" value="SPCC1223.11.1:pep"/>
    <property type="gene ID" value="SPCC1223.11"/>
</dbReference>
<dbReference type="GeneID" id="2539252"/>
<dbReference type="KEGG" id="spo:2539252"/>
<dbReference type="PomBase" id="SPCC1223.11">
    <property type="gene designation" value="ptc2"/>
</dbReference>
<dbReference type="VEuPathDB" id="FungiDB:SPCC1223.11"/>
<dbReference type="eggNOG" id="KOG0698">
    <property type="taxonomic scope" value="Eukaryota"/>
</dbReference>
<dbReference type="HOGENOM" id="CLU_013173_4_2_1"/>
<dbReference type="InParanoid" id="Q09172"/>
<dbReference type="OMA" id="GPGIRNQ"/>
<dbReference type="PhylomeDB" id="Q09172"/>
<dbReference type="PRO" id="PR:Q09172"/>
<dbReference type="Proteomes" id="UP000002485">
    <property type="component" value="Chromosome III"/>
</dbReference>
<dbReference type="GO" id="GO:0005829">
    <property type="term" value="C:cytosol"/>
    <property type="evidence" value="ECO:0007005"/>
    <property type="project" value="PomBase"/>
</dbReference>
<dbReference type="GO" id="GO:0005634">
    <property type="term" value="C:nucleus"/>
    <property type="evidence" value="ECO:0007005"/>
    <property type="project" value="PomBase"/>
</dbReference>
<dbReference type="GO" id="GO:0046872">
    <property type="term" value="F:metal ion binding"/>
    <property type="evidence" value="ECO:0007669"/>
    <property type="project" value="UniProtKB-KW"/>
</dbReference>
<dbReference type="GO" id="GO:0004722">
    <property type="term" value="F:protein serine/threonine phosphatase activity"/>
    <property type="evidence" value="ECO:0000314"/>
    <property type="project" value="UniProtKB"/>
</dbReference>
<dbReference type="GO" id="GO:0030968">
    <property type="term" value="P:endoplasmic reticulum unfolded protein response"/>
    <property type="evidence" value="ECO:0000266"/>
    <property type="project" value="PomBase"/>
</dbReference>
<dbReference type="GO" id="GO:0007165">
    <property type="term" value="P:signal transduction"/>
    <property type="evidence" value="ECO:0000318"/>
    <property type="project" value="GO_Central"/>
</dbReference>
<dbReference type="CDD" id="cd00143">
    <property type="entry name" value="PP2Cc"/>
    <property type="match status" value="1"/>
</dbReference>
<dbReference type="FunFam" id="3.60.40.10:FF:000016">
    <property type="entry name" value="Protein phosphatase 2C"/>
    <property type="match status" value="1"/>
</dbReference>
<dbReference type="Gene3D" id="3.60.40.10">
    <property type="entry name" value="PPM-type phosphatase domain"/>
    <property type="match status" value="1"/>
</dbReference>
<dbReference type="InterPro" id="IPR015655">
    <property type="entry name" value="PP2C"/>
</dbReference>
<dbReference type="InterPro" id="IPR000222">
    <property type="entry name" value="PP2C_BS"/>
</dbReference>
<dbReference type="InterPro" id="IPR036457">
    <property type="entry name" value="PPM-type-like_dom_sf"/>
</dbReference>
<dbReference type="InterPro" id="IPR001932">
    <property type="entry name" value="PPM-type_phosphatase-like_dom"/>
</dbReference>
<dbReference type="PANTHER" id="PTHR13832:SF565">
    <property type="entry name" value="AT28366P-RELATED"/>
    <property type="match status" value="1"/>
</dbReference>
<dbReference type="PANTHER" id="PTHR13832">
    <property type="entry name" value="PROTEIN PHOSPHATASE 2C"/>
    <property type="match status" value="1"/>
</dbReference>
<dbReference type="Pfam" id="PF00481">
    <property type="entry name" value="PP2C"/>
    <property type="match status" value="1"/>
</dbReference>
<dbReference type="SMART" id="SM00332">
    <property type="entry name" value="PP2Cc"/>
    <property type="match status" value="1"/>
</dbReference>
<dbReference type="SUPFAM" id="SSF81606">
    <property type="entry name" value="PP2C-like"/>
    <property type="match status" value="1"/>
</dbReference>
<dbReference type="PROSITE" id="PS01032">
    <property type="entry name" value="PPM_1"/>
    <property type="match status" value="1"/>
</dbReference>
<dbReference type="PROSITE" id="PS51746">
    <property type="entry name" value="PPM_2"/>
    <property type="match status" value="1"/>
</dbReference>
<proteinExistence type="evidence at protein level"/>
<organism>
    <name type="scientific">Schizosaccharomyces pombe (strain 972 / ATCC 24843)</name>
    <name type="common">Fission yeast</name>
    <dbReference type="NCBI Taxonomy" id="284812"/>
    <lineage>
        <taxon>Eukaryota</taxon>
        <taxon>Fungi</taxon>
        <taxon>Dikarya</taxon>
        <taxon>Ascomycota</taxon>
        <taxon>Taphrinomycotina</taxon>
        <taxon>Schizosaccharomycetes</taxon>
        <taxon>Schizosaccharomycetales</taxon>
        <taxon>Schizosaccharomycetaceae</taxon>
        <taxon>Schizosaccharomyces</taxon>
    </lineage>
</organism>
<comment type="function">
    <text evidence="2 4">Dephosphorylating regulator for many key proteins (By similarity). Has an important role in osmotic stability and cell shape control. It may negatively regulate the osmosensing signal transmitted through wis1 map kinase (PubMed:7859738).</text>
</comment>
<comment type="catalytic activity">
    <reaction evidence="7">
        <text>O-phospho-L-seryl-[protein] + H2O = L-seryl-[protein] + phosphate</text>
        <dbReference type="Rhea" id="RHEA:20629"/>
        <dbReference type="Rhea" id="RHEA-COMP:9863"/>
        <dbReference type="Rhea" id="RHEA-COMP:11604"/>
        <dbReference type="ChEBI" id="CHEBI:15377"/>
        <dbReference type="ChEBI" id="CHEBI:29999"/>
        <dbReference type="ChEBI" id="CHEBI:43474"/>
        <dbReference type="ChEBI" id="CHEBI:83421"/>
        <dbReference type="EC" id="3.1.3.16"/>
    </reaction>
    <physiologicalReaction direction="left-to-right" evidence="7">
        <dbReference type="Rhea" id="RHEA:20630"/>
    </physiologicalReaction>
</comment>
<comment type="catalytic activity">
    <reaction evidence="7">
        <text>O-phospho-L-threonyl-[protein] + H2O = L-threonyl-[protein] + phosphate</text>
        <dbReference type="Rhea" id="RHEA:47004"/>
        <dbReference type="Rhea" id="RHEA-COMP:11060"/>
        <dbReference type="Rhea" id="RHEA-COMP:11605"/>
        <dbReference type="ChEBI" id="CHEBI:15377"/>
        <dbReference type="ChEBI" id="CHEBI:30013"/>
        <dbReference type="ChEBI" id="CHEBI:43474"/>
        <dbReference type="ChEBI" id="CHEBI:61977"/>
        <dbReference type="EC" id="3.1.3.16"/>
    </reaction>
    <physiologicalReaction direction="left-to-right" evidence="7">
        <dbReference type="Rhea" id="RHEA:47005"/>
    </physiologicalReaction>
</comment>
<comment type="cofactor">
    <cofactor evidence="1">
        <name>Mg(2+)</name>
        <dbReference type="ChEBI" id="CHEBI:18420"/>
    </cofactor>
    <cofactor evidence="1">
        <name>Mn(2+)</name>
        <dbReference type="ChEBI" id="CHEBI:29035"/>
    </cofactor>
    <text evidence="3">Binds 2 magnesium or manganese ions per subunit.</text>
</comment>
<comment type="activity regulation">
    <text evidence="5">Activity is reduced when phosphosrylated at Ser-355/Ser-357.</text>
</comment>
<comment type="subunit">
    <text>Monomer.</text>
</comment>
<comment type="subcellular location">
    <subcellularLocation>
        <location evidence="2">Nucleus</location>
    </subcellularLocation>
    <subcellularLocation>
        <location evidence="2">Cytoplasm</location>
        <location evidence="2">Cytosol</location>
    </subcellularLocation>
</comment>
<comment type="similarity">
    <text evidence="6">Belongs to the PP2C family.</text>
</comment>